<comment type="function">
    <text evidence="1">Core subunit of the mitochondrial membrane respiratory chain NADH dehydrogenase (Complex I) that is believed to belong to the minimal assembly required for catalysis. Complex I functions in the transfer of electrons from NADH to the respiratory chain. The immediate electron acceptor for the enzyme is believed to be ubiquinone (By similarity).</text>
</comment>
<comment type="catalytic activity">
    <reaction>
        <text>a ubiquinone + NADH + 5 H(+)(in) = a ubiquinol + NAD(+) + 4 H(+)(out)</text>
        <dbReference type="Rhea" id="RHEA:29091"/>
        <dbReference type="Rhea" id="RHEA-COMP:9565"/>
        <dbReference type="Rhea" id="RHEA-COMP:9566"/>
        <dbReference type="ChEBI" id="CHEBI:15378"/>
        <dbReference type="ChEBI" id="CHEBI:16389"/>
        <dbReference type="ChEBI" id="CHEBI:17976"/>
        <dbReference type="ChEBI" id="CHEBI:57540"/>
        <dbReference type="ChEBI" id="CHEBI:57945"/>
        <dbReference type="EC" id="7.1.1.2"/>
    </reaction>
</comment>
<comment type="subcellular location">
    <subcellularLocation>
        <location evidence="1">Mitochondrion inner membrane</location>
        <topology evidence="1">Multi-pass membrane protein</topology>
    </subcellularLocation>
</comment>
<comment type="similarity">
    <text evidence="3">Belongs to the complex I subunit 1 family.</text>
</comment>
<feature type="chain" id="PRO_0000117467" description="NADH-ubiquinone oxidoreductase chain 1">
    <location>
        <begin position="1"/>
        <end position="324"/>
    </location>
</feature>
<feature type="transmembrane region" description="Helical" evidence="2">
    <location>
        <begin position="3"/>
        <end position="23"/>
    </location>
</feature>
<feature type="transmembrane region" description="Helical" evidence="2">
    <location>
        <begin position="73"/>
        <end position="93"/>
    </location>
</feature>
<feature type="transmembrane region" description="Helical" evidence="2">
    <location>
        <begin position="106"/>
        <end position="126"/>
    </location>
</feature>
<feature type="transmembrane region" description="Helical" evidence="2">
    <location>
        <begin position="151"/>
        <end position="171"/>
    </location>
</feature>
<feature type="transmembrane region" description="Helical" evidence="2">
    <location>
        <begin position="175"/>
        <end position="195"/>
    </location>
</feature>
<feature type="transmembrane region" description="Helical" evidence="2">
    <location>
        <begin position="226"/>
        <end position="246"/>
    </location>
</feature>
<feature type="transmembrane region" description="Helical" evidence="2">
    <location>
        <begin position="255"/>
        <end position="275"/>
    </location>
</feature>
<feature type="transmembrane region" description="Helical" evidence="2">
    <location>
        <begin position="295"/>
        <end position="315"/>
    </location>
</feature>
<accession>P16672</accession>
<accession>Q6LDK1</accession>
<sequence length="324" mass="36147">MKLLFMYLLPLLYIAPILLAVAFLTLIERKILGYMQHRKGPNVVGPFGLLQPIADGVKLFIKEPIRPSTSSQLLFILAPTLALALAMIMWTPFPLPIPYSNLNLSILFILAISSLTVYTILGSGWASNSKYALIGALRAVAQTISYEVTLALIILCSVLLAGGFTLSAFAISQEFTWFILPLWPMFLMWFVSTLAETNRAPFDLTEGESELVSGFNVEYAGGPFALFFLAEYANILMMNTLSTIIFLGSCMSSLTLTTSLLMTKASILSLCFLWVRASYPRFRYDQLMHLVWKNFLPLTLALVILYVSMPISLLFTPPLPWKRA</sequence>
<reference key="1">
    <citation type="journal article" date="1988" name="Nippon Ika Daigaku Zasshi">
        <title>The primary and secondary structures of the ribosomal RNAs of Rana catesbeiana mitochondrion.</title>
        <authorList>
            <person name="Nagae Y."/>
        </authorList>
    </citation>
    <scope>NUCLEOTIDE SEQUENCE [GENOMIC DNA]</scope>
</reference>
<reference key="2">
    <citation type="journal article" date="1987" name="Nippon Ika Daigaku Zasshi">
        <title>Cloning of the entire mitochondrial genome of Rana catesbeiana and nucleotide sequencing of the URF2 and its flanking genes.</title>
        <authorList>
            <person name="Fujii H."/>
        </authorList>
    </citation>
    <scope>NUCLEOTIDE SEQUENCE [GENOMIC DNA] OF 256-320</scope>
</reference>
<reference key="3">
    <citation type="journal article" date="1988" name="J. Biochem.">
        <title>Cloning of the mitochondrial genome of Rana catesbeiana and the nucleotide sequences of the ND2 and five tRNA genes.</title>
        <authorList>
            <person name="Fujii H."/>
            <person name="Shimada T."/>
            <person name="Goto Y."/>
            <person name="Okazaki T."/>
        </authorList>
    </citation>
    <scope>NUCLEOTIDE SEQUENCE [GENOMIC DNA] OF 256-320</scope>
</reference>
<keyword id="KW-0249">Electron transport</keyword>
<keyword id="KW-0472">Membrane</keyword>
<keyword id="KW-0496">Mitochondrion</keyword>
<keyword id="KW-0999">Mitochondrion inner membrane</keyword>
<keyword id="KW-0520">NAD</keyword>
<keyword id="KW-0679">Respiratory chain</keyword>
<keyword id="KW-1278">Translocase</keyword>
<keyword id="KW-0812">Transmembrane</keyword>
<keyword id="KW-1133">Transmembrane helix</keyword>
<keyword id="KW-0813">Transport</keyword>
<keyword id="KW-0830">Ubiquinone</keyword>
<name>NU1M_AQUCT</name>
<protein>
    <recommendedName>
        <fullName>NADH-ubiquinone oxidoreductase chain 1</fullName>
        <ecNumber>7.1.1.2</ecNumber>
    </recommendedName>
    <alternativeName>
        <fullName>NADH dehydrogenase subunit 1</fullName>
    </alternativeName>
</protein>
<organism>
    <name type="scientific">Aquarana catesbeiana</name>
    <name type="common">American bullfrog</name>
    <name type="synonym">Rana catesbeiana</name>
    <dbReference type="NCBI Taxonomy" id="8400"/>
    <lineage>
        <taxon>Eukaryota</taxon>
        <taxon>Metazoa</taxon>
        <taxon>Chordata</taxon>
        <taxon>Craniata</taxon>
        <taxon>Vertebrata</taxon>
        <taxon>Euteleostomi</taxon>
        <taxon>Amphibia</taxon>
        <taxon>Batrachia</taxon>
        <taxon>Anura</taxon>
        <taxon>Neobatrachia</taxon>
        <taxon>Ranoidea</taxon>
        <taxon>Ranidae</taxon>
        <taxon>Aquarana</taxon>
    </lineage>
</organism>
<geneLocation type="mitochondrion"/>
<dbReference type="EC" id="7.1.1.2"/>
<dbReference type="EMBL" id="M57527">
    <property type="protein sequence ID" value="AAA65487.3"/>
    <property type="molecule type" value="Genomic_DNA"/>
</dbReference>
<dbReference type="EMBL" id="D10368">
    <property type="status" value="NOT_ANNOTATED_CDS"/>
    <property type="molecule type" value="Genomic_DNA"/>
</dbReference>
<dbReference type="PIR" id="A30478">
    <property type="entry name" value="A30478"/>
</dbReference>
<dbReference type="SMR" id="P16672"/>
<dbReference type="GO" id="GO:0005743">
    <property type="term" value="C:mitochondrial inner membrane"/>
    <property type="evidence" value="ECO:0007669"/>
    <property type="project" value="UniProtKB-SubCell"/>
</dbReference>
<dbReference type="GO" id="GO:0008137">
    <property type="term" value="F:NADH dehydrogenase (ubiquinone) activity"/>
    <property type="evidence" value="ECO:0007669"/>
    <property type="project" value="UniProtKB-EC"/>
</dbReference>
<dbReference type="GO" id="GO:0009060">
    <property type="term" value="P:aerobic respiration"/>
    <property type="evidence" value="ECO:0007669"/>
    <property type="project" value="TreeGrafter"/>
</dbReference>
<dbReference type="HAMAP" id="MF_01350">
    <property type="entry name" value="NDH1_NuoH"/>
    <property type="match status" value="1"/>
</dbReference>
<dbReference type="InterPro" id="IPR001694">
    <property type="entry name" value="NADH_UbQ_OxRdtase_su1/FPO"/>
</dbReference>
<dbReference type="InterPro" id="IPR018086">
    <property type="entry name" value="NADH_UbQ_OxRdtase_su1_CS"/>
</dbReference>
<dbReference type="PANTHER" id="PTHR11432">
    <property type="entry name" value="NADH DEHYDROGENASE SUBUNIT 1"/>
    <property type="match status" value="1"/>
</dbReference>
<dbReference type="PANTHER" id="PTHR11432:SF3">
    <property type="entry name" value="NADH-UBIQUINONE OXIDOREDUCTASE CHAIN 1"/>
    <property type="match status" value="1"/>
</dbReference>
<dbReference type="Pfam" id="PF00146">
    <property type="entry name" value="NADHdh"/>
    <property type="match status" value="1"/>
</dbReference>
<dbReference type="PROSITE" id="PS00667">
    <property type="entry name" value="COMPLEX1_ND1_1"/>
    <property type="match status" value="1"/>
</dbReference>
<dbReference type="PROSITE" id="PS00668">
    <property type="entry name" value="COMPLEX1_ND1_2"/>
    <property type="match status" value="1"/>
</dbReference>
<evidence type="ECO:0000250" key="1"/>
<evidence type="ECO:0000255" key="2"/>
<evidence type="ECO:0000305" key="3"/>
<proteinExistence type="inferred from homology"/>
<gene>
    <name type="primary">MT-ND1</name>
    <name type="synonym">MTND1</name>
    <name type="synonym">NADH1</name>
    <name type="synonym">ND1</name>
</gene>